<comment type="function">
    <text evidence="1">Catalyzes the attachment of proline to tRNA(Pro) in a two-step reaction: proline is first activated by ATP to form Pro-AMP and then transferred to the acceptor end of tRNA(Pro). As ProRS can inadvertently accommodate and process non-cognate amino acids such as alanine and cysteine, to avoid such errors it has two additional distinct editing activities against alanine. One activity is designated as 'pretransfer' editing and involves the tRNA(Pro)-independent hydrolysis of activated Ala-AMP. The other activity is designated 'posttransfer' editing and involves deacylation of mischarged Ala-tRNA(Pro). The misacylated Cys-tRNA(Pro) is not edited by ProRS.</text>
</comment>
<comment type="catalytic activity">
    <reaction evidence="1">
        <text>tRNA(Pro) + L-proline + ATP = L-prolyl-tRNA(Pro) + AMP + diphosphate</text>
        <dbReference type="Rhea" id="RHEA:14305"/>
        <dbReference type="Rhea" id="RHEA-COMP:9700"/>
        <dbReference type="Rhea" id="RHEA-COMP:9702"/>
        <dbReference type="ChEBI" id="CHEBI:30616"/>
        <dbReference type="ChEBI" id="CHEBI:33019"/>
        <dbReference type="ChEBI" id="CHEBI:60039"/>
        <dbReference type="ChEBI" id="CHEBI:78442"/>
        <dbReference type="ChEBI" id="CHEBI:78532"/>
        <dbReference type="ChEBI" id="CHEBI:456215"/>
        <dbReference type="EC" id="6.1.1.15"/>
    </reaction>
</comment>
<comment type="subunit">
    <text evidence="1">Homodimer.</text>
</comment>
<comment type="subcellular location">
    <subcellularLocation>
        <location evidence="1">Cytoplasm</location>
    </subcellularLocation>
</comment>
<comment type="domain">
    <text evidence="1">Consists of three domains: the N-terminal catalytic domain, the editing domain and the C-terminal anticodon-binding domain.</text>
</comment>
<comment type="similarity">
    <text evidence="1">Belongs to the class-II aminoacyl-tRNA synthetase family. ProS type 1 subfamily.</text>
</comment>
<gene>
    <name evidence="1" type="primary">proS</name>
    <name type="ordered locus">SMU_1783</name>
</gene>
<reference key="1">
    <citation type="journal article" date="2002" name="Proc. Natl. Acad. Sci. U.S.A.">
        <title>Genome sequence of Streptococcus mutans UA159, a cariogenic dental pathogen.</title>
        <authorList>
            <person name="Ajdic D.J."/>
            <person name="McShan W.M."/>
            <person name="McLaughlin R.E."/>
            <person name="Savic G."/>
            <person name="Chang J."/>
            <person name="Carson M.B."/>
            <person name="Primeaux C."/>
            <person name="Tian R."/>
            <person name="Kenton S."/>
            <person name="Jia H.G."/>
            <person name="Lin S.P."/>
            <person name="Qian Y."/>
            <person name="Li S."/>
            <person name="Zhu H."/>
            <person name="Najar F.Z."/>
            <person name="Lai H."/>
            <person name="White J."/>
            <person name="Roe B.A."/>
            <person name="Ferretti J.J."/>
        </authorList>
    </citation>
    <scope>NUCLEOTIDE SEQUENCE [LARGE SCALE GENOMIC DNA]</scope>
    <source>
        <strain>ATCC 700610 / UA159</strain>
    </source>
</reference>
<organism>
    <name type="scientific">Streptococcus mutans serotype c (strain ATCC 700610 / UA159)</name>
    <dbReference type="NCBI Taxonomy" id="210007"/>
    <lineage>
        <taxon>Bacteria</taxon>
        <taxon>Bacillati</taxon>
        <taxon>Bacillota</taxon>
        <taxon>Bacilli</taxon>
        <taxon>Lactobacillales</taxon>
        <taxon>Streptococcaceae</taxon>
        <taxon>Streptococcus</taxon>
    </lineage>
</organism>
<keyword id="KW-0030">Aminoacyl-tRNA synthetase</keyword>
<keyword id="KW-0067">ATP-binding</keyword>
<keyword id="KW-0963">Cytoplasm</keyword>
<keyword id="KW-0436">Ligase</keyword>
<keyword id="KW-0547">Nucleotide-binding</keyword>
<keyword id="KW-0648">Protein biosynthesis</keyword>
<keyword id="KW-1185">Reference proteome</keyword>
<proteinExistence type="inferred from homology"/>
<name>SYP_STRMU</name>
<accession>Q8DSJ9</accession>
<sequence>MKQSNMLIPTLREMPSDAQVISHALMVRAGYVRQVSAGIYSYLPLAHRVIEKIKKIMREEFDKIGAVEMLAPALLTADLWRESGRYGTYGEDLYKLKNRDQSDFILGPTHEETFTNLIRDAVKSYKQLPLNLYQIQAKYRDEKRPRNGLLRTREFIMKDGYSFHADYDSLDATYEDYRKAYEAIFTRVGLDFKAIIGDGGAMGGKDSQEFMAVTPDRTDLEHWLVLDKAIGSIEEIPADVLKEIKQELSSWLISGEDTIAYSSESDYAANLEMATSEYKPNNKVVSHEDIQRIETPNCKTIDEVAAFLEIDPTQTIKTLLFIADDEPVVALLVGNDQVNEVKLKNYLGADFLEPANEEEAREIFSASFGSLGPVNLPENVKIVADRKVKNIGNAVVGANEDGYHLTGVNPERDFEAAYVDIREVCEGEASPDGRGVLKFARGIEIGHIFKLGTRYSESMGANILDENGRSIPIIMGSYGIGVSRILSAVIEQNARIFVNKTPKGAYRFSWGVNFPKTLAPFDVHLITVNVKDEVSQQLTAKVEESLVDAHYSVLTDNRNERIGSKFSDSDLIGLPIRVTVGKKASDGIVEVKIKSTGDTIEVNAENLLETLSILID</sequence>
<feature type="chain" id="PRO_0000248776" description="Proline--tRNA ligase">
    <location>
        <begin position="1"/>
        <end position="616"/>
    </location>
</feature>
<evidence type="ECO:0000255" key="1">
    <source>
        <dbReference type="HAMAP-Rule" id="MF_01569"/>
    </source>
</evidence>
<dbReference type="EC" id="6.1.1.15" evidence="1"/>
<dbReference type="EMBL" id="AE014133">
    <property type="protein sequence ID" value="AAN59410.1"/>
    <property type="molecule type" value="Genomic_DNA"/>
</dbReference>
<dbReference type="RefSeq" id="NP_722104.1">
    <property type="nucleotide sequence ID" value="NC_004350.2"/>
</dbReference>
<dbReference type="RefSeq" id="WP_002263521.1">
    <property type="nucleotide sequence ID" value="NC_004350.2"/>
</dbReference>
<dbReference type="SMR" id="Q8DSJ9"/>
<dbReference type="STRING" id="210007.SMU_1783"/>
<dbReference type="KEGG" id="smu:SMU_1783"/>
<dbReference type="PATRIC" id="fig|210007.7.peg.1591"/>
<dbReference type="eggNOG" id="COG0442">
    <property type="taxonomic scope" value="Bacteria"/>
</dbReference>
<dbReference type="HOGENOM" id="CLU_016739_0_0_9"/>
<dbReference type="OrthoDB" id="9809052at2"/>
<dbReference type="PhylomeDB" id="Q8DSJ9"/>
<dbReference type="Proteomes" id="UP000002512">
    <property type="component" value="Chromosome"/>
</dbReference>
<dbReference type="GO" id="GO:0005829">
    <property type="term" value="C:cytosol"/>
    <property type="evidence" value="ECO:0007669"/>
    <property type="project" value="TreeGrafter"/>
</dbReference>
<dbReference type="GO" id="GO:0002161">
    <property type="term" value="F:aminoacyl-tRNA deacylase activity"/>
    <property type="evidence" value="ECO:0007669"/>
    <property type="project" value="InterPro"/>
</dbReference>
<dbReference type="GO" id="GO:0005524">
    <property type="term" value="F:ATP binding"/>
    <property type="evidence" value="ECO:0007669"/>
    <property type="project" value="UniProtKB-UniRule"/>
</dbReference>
<dbReference type="GO" id="GO:0140096">
    <property type="term" value="F:catalytic activity, acting on a protein"/>
    <property type="evidence" value="ECO:0007669"/>
    <property type="project" value="UniProtKB-ARBA"/>
</dbReference>
<dbReference type="GO" id="GO:0004827">
    <property type="term" value="F:proline-tRNA ligase activity"/>
    <property type="evidence" value="ECO:0007669"/>
    <property type="project" value="UniProtKB-UniRule"/>
</dbReference>
<dbReference type="GO" id="GO:0016740">
    <property type="term" value="F:transferase activity"/>
    <property type="evidence" value="ECO:0007669"/>
    <property type="project" value="UniProtKB-ARBA"/>
</dbReference>
<dbReference type="GO" id="GO:0006433">
    <property type="term" value="P:prolyl-tRNA aminoacylation"/>
    <property type="evidence" value="ECO:0007669"/>
    <property type="project" value="UniProtKB-UniRule"/>
</dbReference>
<dbReference type="CDD" id="cd04334">
    <property type="entry name" value="ProRS-INS"/>
    <property type="match status" value="1"/>
</dbReference>
<dbReference type="CDD" id="cd00861">
    <property type="entry name" value="ProRS_anticodon_short"/>
    <property type="match status" value="1"/>
</dbReference>
<dbReference type="CDD" id="cd00779">
    <property type="entry name" value="ProRS_core_prok"/>
    <property type="match status" value="1"/>
</dbReference>
<dbReference type="FunFam" id="3.30.930.10:FF:000062">
    <property type="entry name" value="Proline--tRNA ligase"/>
    <property type="match status" value="1"/>
</dbReference>
<dbReference type="FunFam" id="3.30.930.10:FF:000070">
    <property type="entry name" value="Proline--tRNA ligase"/>
    <property type="match status" value="1"/>
</dbReference>
<dbReference type="FunFam" id="3.40.50.800:FF:000011">
    <property type="entry name" value="Proline--tRNA ligase"/>
    <property type="match status" value="1"/>
</dbReference>
<dbReference type="Gene3D" id="3.40.50.800">
    <property type="entry name" value="Anticodon-binding domain"/>
    <property type="match status" value="1"/>
</dbReference>
<dbReference type="Gene3D" id="3.30.930.10">
    <property type="entry name" value="Bira Bifunctional Protein, Domain 2"/>
    <property type="match status" value="2"/>
</dbReference>
<dbReference type="Gene3D" id="3.90.960.10">
    <property type="entry name" value="YbaK/aminoacyl-tRNA synthetase-associated domain"/>
    <property type="match status" value="1"/>
</dbReference>
<dbReference type="HAMAP" id="MF_01569">
    <property type="entry name" value="Pro_tRNA_synth_type1"/>
    <property type="match status" value="1"/>
</dbReference>
<dbReference type="InterPro" id="IPR002314">
    <property type="entry name" value="aa-tRNA-synt_IIb"/>
</dbReference>
<dbReference type="InterPro" id="IPR006195">
    <property type="entry name" value="aa-tRNA-synth_II"/>
</dbReference>
<dbReference type="InterPro" id="IPR045864">
    <property type="entry name" value="aa-tRNA-synth_II/BPL/LPL"/>
</dbReference>
<dbReference type="InterPro" id="IPR004154">
    <property type="entry name" value="Anticodon-bd"/>
</dbReference>
<dbReference type="InterPro" id="IPR036621">
    <property type="entry name" value="Anticodon-bd_dom_sf"/>
</dbReference>
<dbReference type="InterPro" id="IPR002316">
    <property type="entry name" value="Pro-tRNA-ligase_IIa"/>
</dbReference>
<dbReference type="InterPro" id="IPR004500">
    <property type="entry name" value="Pro-tRNA-synth_IIa_bac-type"/>
</dbReference>
<dbReference type="InterPro" id="IPR023717">
    <property type="entry name" value="Pro-tRNA-Synthase_IIa_type1"/>
</dbReference>
<dbReference type="InterPro" id="IPR050062">
    <property type="entry name" value="Pro-tRNA_synthetase"/>
</dbReference>
<dbReference type="InterPro" id="IPR044140">
    <property type="entry name" value="ProRS_anticodon_short"/>
</dbReference>
<dbReference type="InterPro" id="IPR033730">
    <property type="entry name" value="ProRS_core_prok"/>
</dbReference>
<dbReference type="InterPro" id="IPR036754">
    <property type="entry name" value="YbaK/aa-tRNA-synt-asso_dom_sf"/>
</dbReference>
<dbReference type="InterPro" id="IPR007214">
    <property type="entry name" value="YbaK/aa-tRNA-synth-assoc-dom"/>
</dbReference>
<dbReference type="NCBIfam" id="NF006625">
    <property type="entry name" value="PRK09194.1"/>
    <property type="match status" value="1"/>
</dbReference>
<dbReference type="NCBIfam" id="TIGR00409">
    <property type="entry name" value="proS_fam_II"/>
    <property type="match status" value="1"/>
</dbReference>
<dbReference type="PANTHER" id="PTHR42753">
    <property type="entry name" value="MITOCHONDRIAL RIBOSOME PROTEIN L39/PROLYL-TRNA LIGASE FAMILY MEMBER"/>
    <property type="match status" value="1"/>
</dbReference>
<dbReference type="PANTHER" id="PTHR42753:SF2">
    <property type="entry name" value="PROLINE--TRNA LIGASE"/>
    <property type="match status" value="1"/>
</dbReference>
<dbReference type="Pfam" id="PF03129">
    <property type="entry name" value="HGTP_anticodon"/>
    <property type="match status" value="1"/>
</dbReference>
<dbReference type="Pfam" id="PF00587">
    <property type="entry name" value="tRNA-synt_2b"/>
    <property type="match status" value="1"/>
</dbReference>
<dbReference type="Pfam" id="PF04073">
    <property type="entry name" value="tRNA_edit"/>
    <property type="match status" value="1"/>
</dbReference>
<dbReference type="PRINTS" id="PR01046">
    <property type="entry name" value="TRNASYNTHPRO"/>
</dbReference>
<dbReference type="SUPFAM" id="SSF52954">
    <property type="entry name" value="Class II aaRS ABD-related"/>
    <property type="match status" value="1"/>
</dbReference>
<dbReference type="SUPFAM" id="SSF55681">
    <property type="entry name" value="Class II aaRS and biotin synthetases"/>
    <property type="match status" value="1"/>
</dbReference>
<dbReference type="SUPFAM" id="SSF55826">
    <property type="entry name" value="YbaK/ProRS associated domain"/>
    <property type="match status" value="1"/>
</dbReference>
<dbReference type="PROSITE" id="PS50862">
    <property type="entry name" value="AA_TRNA_LIGASE_II"/>
    <property type="match status" value="1"/>
</dbReference>
<protein>
    <recommendedName>
        <fullName evidence="1">Proline--tRNA ligase</fullName>
        <ecNumber evidence="1">6.1.1.15</ecNumber>
    </recommendedName>
    <alternativeName>
        <fullName evidence="1">Prolyl-tRNA synthetase</fullName>
        <shortName evidence="1">ProRS</shortName>
    </alternativeName>
</protein>